<gene>
    <name type="primary">mtsA</name>
    <name type="ordered locus">spyM18_0494</name>
</gene>
<evidence type="ECO:0000250" key="1">
    <source>
        <dbReference type="UniProtKB" id="P0A4G4"/>
    </source>
</evidence>
<evidence type="ECO:0000255" key="2">
    <source>
        <dbReference type="PROSITE-ProRule" id="PRU00303"/>
    </source>
</evidence>
<evidence type="ECO:0000305" key="3"/>
<dbReference type="EMBL" id="AE009949">
    <property type="protein sequence ID" value="AAL97215.1"/>
    <property type="molecule type" value="Genomic_DNA"/>
</dbReference>
<dbReference type="RefSeq" id="WP_011017446.1">
    <property type="nucleotide sequence ID" value="NC_003485.1"/>
</dbReference>
<dbReference type="SMR" id="Q8P280"/>
<dbReference type="KEGG" id="spm:spyM18_0494"/>
<dbReference type="HOGENOM" id="CLU_016838_1_1_9"/>
<dbReference type="GO" id="GO:0005886">
    <property type="term" value="C:plasma membrane"/>
    <property type="evidence" value="ECO:0007669"/>
    <property type="project" value="UniProtKB-SubCell"/>
</dbReference>
<dbReference type="GO" id="GO:0046872">
    <property type="term" value="F:metal ion binding"/>
    <property type="evidence" value="ECO:0007669"/>
    <property type="project" value="UniProtKB-KW"/>
</dbReference>
<dbReference type="GO" id="GO:0007155">
    <property type="term" value="P:cell adhesion"/>
    <property type="evidence" value="ECO:0007669"/>
    <property type="project" value="InterPro"/>
</dbReference>
<dbReference type="GO" id="GO:0006826">
    <property type="term" value="P:iron ion transport"/>
    <property type="evidence" value="ECO:0007669"/>
    <property type="project" value="UniProtKB-KW"/>
</dbReference>
<dbReference type="CDD" id="cd01137">
    <property type="entry name" value="PsaA"/>
    <property type="match status" value="1"/>
</dbReference>
<dbReference type="Gene3D" id="3.40.50.1980">
    <property type="entry name" value="Nitrogenase molybdenum iron protein domain"/>
    <property type="match status" value="2"/>
</dbReference>
<dbReference type="InterPro" id="IPR006129">
    <property type="entry name" value="AdhesinB"/>
</dbReference>
<dbReference type="InterPro" id="IPR050492">
    <property type="entry name" value="Bact_metal-bind_prot9"/>
</dbReference>
<dbReference type="InterPro" id="IPR006128">
    <property type="entry name" value="Lipoprotein_PsaA-like"/>
</dbReference>
<dbReference type="InterPro" id="IPR006127">
    <property type="entry name" value="ZnuA-like"/>
</dbReference>
<dbReference type="NCBIfam" id="NF040928">
    <property type="entry name" value="ABC_lipo_SloC"/>
    <property type="match status" value="1"/>
</dbReference>
<dbReference type="PANTHER" id="PTHR42953">
    <property type="entry name" value="HIGH-AFFINITY ZINC UPTAKE SYSTEM PROTEIN ZNUA-RELATED"/>
    <property type="match status" value="1"/>
</dbReference>
<dbReference type="PANTHER" id="PTHR42953:SF1">
    <property type="entry name" value="METAL-BINDING PROTEIN HI_0362-RELATED"/>
    <property type="match status" value="1"/>
</dbReference>
<dbReference type="Pfam" id="PF01297">
    <property type="entry name" value="ZnuA"/>
    <property type="match status" value="1"/>
</dbReference>
<dbReference type="PRINTS" id="PR00691">
    <property type="entry name" value="ADHESINB"/>
</dbReference>
<dbReference type="PRINTS" id="PR00690">
    <property type="entry name" value="ADHESNFAMILY"/>
</dbReference>
<dbReference type="SUPFAM" id="SSF53807">
    <property type="entry name" value="Helical backbone' metal receptor"/>
    <property type="match status" value="1"/>
</dbReference>
<dbReference type="PROSITE" id="PS51257">
    <property type="entry name" value="PROKAR_LIPOPROTEIN"/>
    <property type="match status" value="1"/>
</dbReference>
<feature type="signal peptide" evidence="2">
    <location>
        <begin position="1"/>
        <end position="20"/>
    </location>
</feature>
<feature type="chain" id="PRO_0000031897" description="Iron ABC transporter substrate-binding lipoprotein MtsA">
    <location>
        <begin position="21"/>
        <end position="310"/>
    </location>
</feature>
<feature type="binding site" evidence="1">
    <location>
        <position position="68"/>
    </location>
    <ligand>
        <name>Fe(2+)</name>
        <dbReference type="ChEBI" id="CHEBI:29033"/>
    </ligand>
</feature>
<feature type="binding site" evidence="1">
    <location>
        <position position="140"/>
    </location>
    <ligand>
        <name>Fe(2+)</name>
        <dbReference type="ChEBI" id="CHEBI:29033"/>
    </ligand>
</feature>
<feature type="binding site" evidence="1">
    <location>
        <position position="206"/>
    </location>
    <ligand>
        <name>Fe(2+)</name>
        <dbReference type="ChEBI" id="CHEBI:29033"/>
    </ligand>
</feature>
<feature type="binding site" evidence="1">
    <location>
        <position position="281"/>
    </location>
    <ligand>
        <name>Fe(2+)</name>
        <dbReference type="ChEBI" id="CHEBI:29033"/>
    </ligand>
</feature>
<feature type="lipid moiety-binding region" description="N-palmitoyl cysteine" evidence="2">
    <location>
        <position position="21"/>
    </location>
</feature>
<feature type="lipid moiety-binding region" description="S-diacylglycerol cysteine" evidence="2">
    <location>
        <position position="21"/>
    </location>
</feature>
<accession>Q8P280</accession>
<protein>
    <recommendedName>
        <fullName evidence="3">Iron ABC transporter substrate-binding lipoprotein MtsA</fullName>
    </recommendedName>
</protein>
<name>MTSA_STRP8</name>
<reference key="1">
    <citation type="journal article" date="2002" name="Proc. Natl. Acad. Sci. U.S.A.">
        <title>Genome sequence and comparative microarray analysis of serotype M18 group A Streptococcus strains associated with acute rheumatic fever outbreaks.</title>
        <authorList>
            <person name="Smoot J.C."/>
            <person name="Barbian K.D."/>
            <person name="Van Gompel J.J."/>
            <person name="Smoot L.M."/>
            <person name="Chaussee M.S."/>
            <person name="Sylva G.L."/>
            <person name="Sturdevant D.E."/>
            <person name="Ricklefs S.M."/>
            <person name="Porcella S.F."/>
            <person name="Parkins L.D."/>
            <person name="Beres S.B."/>
            <person name="Campbell D.S."/>
            <person name="Smith T.M."/>
            <person name="Zhang Q."/>
            <person name="Kapur V."/>
            <person name="Daly J.A."/>
            <person name="Veasy L.G."/>
            <person name="Musser J.M."/>
        </authorList>
    </citation>
    <scope>NUCLEOTIDE SEQUENCE [LARGE SCALE GENOMIC DNA]</scope>
    <source>
        <strain>MGAS8232</strain>
    </source>
</reference>
<sequence length="310" mass="34330">MGKKMSLILGAFLSVFLLVACSSTGTKTAKSDKLKVVATNSIIADMTKAIAGDKIDLHSIVPIGQDPHEYEPLPEDVEKTSNADVIFYNGINLEDGGQAWFTKLVKNAQKTKNKDYFAVSDGIDVIYLEGASEKGKEDPHAWLNLENGIIYSKNIAKQLIAKDPKNKETYEKNLKAYVAKLEKLDKEAKSKFDAIAENKKLIVTSEGCFKYFSKAYGVPSAYIWEINTEEEGTPDQISSLIEKLKVIKPSALFVESSVDRRPMETVSKDSGIPIYSEIFTDSIAKKGKPGDSYYAMMKWNLDKISEGLAK</sequence>
<proteinExistence type="inferred from homology"/>
<comment type="function">
    <text evidence="1">Part of the ATP-binding cassette (ABC) transport system MtsABC involved in iron import. Binds iron with high affinity and specificity and delivers it to the membrane permease for translocation into the cytoplasm. Has low affinity for Zn(2+) and Cu(2+).</text>
</comment>
<comment type="subcellular location">
    <subcellularLocation>
        <location evidence="2">Cell membrane</location>
        <topology evidence="2">Lipid-anchor</topology>
    </subcellularLocation>
</comment>
<comment type="similarity">
    <text evidence="3">Belongs to the bacterial solute-binding protein 9 family. Lipoprotein receptor antigen (Lrai) subfamily.</text>
</comment>
<organism>
    <name type="scientific">Streptococcus pyogenes serotype M18 (strain MGAS8232)</name>
    <dbReference type="NCBI Taxonomy" id="186103"/>
    <lineage>
        <taxon>Bacteria</taxon>
        <taxon>Bacillati</taxon>
        <taxon>Bacillota</taxon>
        <taxon>Bacilli</taxon>
        <taxon>Lactobacillales</taxon>
        <taxon>Streptococcaceae</taxon>
        <taxon>Streptococcus</taxon>
    </lineage>
</organism>
<keyword id="KW-1003">Cell membrane</keyword>
<keyword id="KW-0406">Ion transport</keyword>
<keyword id="KW-0408">Iron</keyword>
<keyword id="KW-0410">Iron transport</keyword>
<keyword id="KW-0449">Lipoprotein</keyword>
<keyword id="KW-0472">Membrane</keyword>
<keyword id="KW-0479">Metal-binding</keyword>
<keyword id="KW-0564">Palmitate</keyword>
<keyword id="KW-0732">Signal</keyword>
<keyword id="KW-0813">Transport</keyword>